<reference key="1">
    <citation type="journal article" date="2003" name="Mol. Microbiol.">
        <title>Genome-based analysis of virulence genes in a non-biofilm-forming Staphylococcus epidermidis strain (ATCC 12228).</title>
        <authorList>
            <person name="Zhang Y.-Q."/>
            <person name="Ren S.-X."/>
            <person name="Li H.-L."/>
            <person name="Wang Y.-X."/>
            <person name="Fu G."/>
            <person name="Yang J."/>
            <person name="Qin Z.-Q."/>
            <person name="Miao Y.-G."/>
            <person name="Wang W.-Y."/>
            <person name="Chen R.-S."/>
            <person name="Shen Y."/>
            <person name="Chen Z."/>
            <person name="Yuan Z.-H."/>
            <person name="Zhao G.-P."/>
            <person name="Qu D."/>
            <person name="Danchin A."/>
            <person name="Wen Y.-M."/>
        </authorList>
    </citation>
    <scope>NUCLEOTIDE SEQUENCE [LARGE SCALE GENOMIC DNA]</scope>
    <source>
        <strain>ATCC 12228 / FDA PCI 1200</strain>
    </source>
</reference>
<organism>
    <name type="scientific">Staphylococcus epidermidis (strain ATCC 12228 / FDA PCI 1200)</name>
    <dbReference type="NCBI Taxonomy" id="176280"/>
    <lineage>
        <taxon>Bacteria</taxon>
        <taxon>Bacillati</taxon>
        <taxon>Bacillota</taxon>
        <taxon>Bacilli</taxon>
        <taxon>Bacillales</taxon>
        <taxon>Staphylococcaceae</taxon>
        <taxon>Staphylococcus</taxon>
    </lineage>
</organism>
<evidence type="ECO:0000250" key="1"/>
<evidence type="ECO:0000255" key="2"/>
<evidence type="ECO:0000305" key="3"/>
<keyword id="KW-0050">Antiport</keyword>
<keyword id="KW-1003">Cell membrane</keyword>
<keyword id="KW-0406">Ion transport</keyword>
<keyword id="KW-0472">Membrane</keyword>
<keyword id="KW-0812">Transmembrane</keyword>
<keyword id="KW-1133">Transmembrane helix</keyword>
<keyword id="KW-0813">Transport</keyword>
<proteinExistence type="inferred from homology"/>
<comment type="subunit">
    <text evidence="1">May form a heterooligomeric complex that consists of seven subunits: mnhA2, mnhB2, mnhC2, mnhD2, mnhE2, mnhF2 and mnhG2.</text>
</comment>
<comment type="subcellular location">
    <subcellularLocation>
        <location evidence="3">Cell membrane</location>
        <topology evidence="3">Multi-pass membrane protein</topology>
    </subcellularLocation>
</comment>
<comment type="similarity">
    <text evidence="3">Belongs to the CPA3 antiporters (TC 2.A.63) subunit B family.</text>
</comment>
<sequence length="141" mass="15251">MKENDVVLKSVTKIVVFILLTFGFYVFFAGHNNPGGGFIGGLIFSSAFILMFLAFDVNEVLKSLPIDFKKLMIIGSLISVATASVPMFFGKPFLYQTEANVTFPLLGHVHVTTVTLFELGILLTVVGVIVTVMLSISGGRS</sequence>
<gene>
    <name type="primary">mnhB2</name>
    <name type="synonym">mrpB2</name>
    <name type="ordered locus">SE_0398</name>
</gene>
<dbReference type="EMBL" id="AE015929">
    <property type="protein sequence ID" value="AAO03995.1"/>
    <property type="molecule type" value="Genomic_DNA"/>
</dbReference>
<dbReference type="RefSeq" id="NP_763953.1">
    <property type="nucleotide sequence ID" value="NC_004461.1"/>
</dbReference>
<dbReference type="RefSeq" id="WP_001832105.1">
    <property type="nucleotide sequence ID" value="NZ_WBME01000020.1"/>
</dbReference>
<dbReference type="SMR" id="Q8CQ49"/>
<dbReference type="GeneID" id="50019445"/>
<dbReference type="KEGG" id="sep:SE_0398"/>
<dbReference type="PATRIC" id="fig|176280.10.peg.372"/>
<dbReference type="eggNOG" id="COG2111">
    <property type="taxonomic scope" value="Bacteria"/>
</dbReference>
<dbReference type="HOGENOM" id="CLU_101659_1_1_9"/>
<dbReference type="OrthoDB" id="9798859at2"/>
<dbReference type="Proteomes" id="UP000001411">
    <property type="component" value="Chromosome"/>
</dbReference>
<dbReference type="GO" id="GO:0005886">
    <property type="term" value="C:plasma membrane"/>
    <property type="evidence" value="ECO:0007669"/>
    <property type="project" value="UniProtKB-SubCell"/>
</dbReference>
<dbReference type="GO" id="GO:0015297">
    <property type="term" value="F:antiporter activity"/>
    <property type="evidence" value="ECO:0007669"/>
    <property type="project" value="UniProtKB-KW"/>
</dbReference>
<dbReference type="GO" id="GO:0006811">
    <property type="term" value="P:monoatomic ion transport"/>
    <property type="evidence" value="ECO:0007669"/>
    <property type="project" value="UniProtKB-KW"/>
</dbReference>
<dbReference type="InterPro" id="IPR050622">
    <property type="entry name" value="CPA3_antiporter_subunitB"/>
</dbReference>
<dbReference type="InterPro" id="IPR007182">
    <property type="entry name" value="MnhB"/>
</dbReference>
<dbReference type="NCBIfam" id="NF009223">
    <property type="entry name" value="PRK12573.1"/>
    <property type="match status" value="1"/>
</dbReference>
<dbReference type="NCBIfam" id="NF009224">
    <property type="entry name" value="PRK12574.1"/>
    <property type="match status" value="1"/>
</dbReference>
<dbReference type="PANTHER" id="PTHR33932">
    <property type="entry name" value="NA(+)/H(+) ANTIPORTER SUBUNIT B"/>
    <property type="match status" value="1"/>
</dbReference>
<dbReference type="PANTHER" id="PTHR33932:SF4">
    <property type="entry name" value="NA(+)_H(+) ANTIPORTER SUBUNIT B"/>
    <property type="match status" value="1"/>
</dbReference>
<dbReference type="Pfam" id="PF04039">
    <property type="entry name" value="MnhB"/>
    <property type="match status" value="1"/>
</dbReference>
<feature type="chain" id="PRO_0000372281" description="Putative antiporter subunit mnhB2">
    <location>
        <begin position="1"/>
        <end position="141"/>
    </location>
</feature>
<feature type="transmembrane region" description="Helical" evidence="2">
    <location>
        <begin position="10"/>
        <end position="30"/>
    </location>
</feature>
<feature type="transmembrane region" description="Helical" evidence="2">
    <location>
        <begin position="35"/>
        <end position="55"/>
    </location>
</feature>
<feature type="transmembrane region" description="Helical" evidence="2">
    <location>
        <begin position="70"/>
        <end position="90"/>
    </location>
</feature>
<feature type="transmembrane region" description="Helical" evidence="2">
    <location>
        <begin position="116"/>
        <end position="136"/>
    </location>
</feature>
<protein>
    <recommendedName>
        <fullName>Putative antiporter subunit mnhB2</fullName>
    </recommendedName>
    <alternativeName>
        <fullName>Mrp complex subunit B2</fullName>
    </alternativeName>
    <alternativeName>
        <fullName>Putative NADH-ubiquinone oxidoreductase subunit mnhB2</fullName>
    </alternativeName>
</protein>
<accession>Q8CQ49</accession>
<name>MNHB2_STAES</name>